<gene>
    <name evidence="1" type="primary">lnt</name>
    <name type="synonym">actA</name>
    <name type="ordered locus">R00409</name>
    <name type="ORF">SMc01111</name>
</gene>
<dbReference type="EC" id="2.3.1.269" evidence="1"/>
<dbReference type="EMBL" id="AL591688">
    <property type="protein sequence ID" value="CAC41846.1"/>
    <property type="molecule type" value="Genomic_DNA"/>
</dbReference>
<dbReference type="RefSeq" id="NP_384515.1">
    <property type="nucleotide sequence ID" value="NC_003047.1"/>
</dbReference>
<dbReference type="RefSeq" id="WP_010968556.1">
    <property type="nucleotide sequence ID" value="NC_003047.1"/>
</dbReference>
<dbReference type="SMR" id="P58377"/>
<dbReference type="EnsemblBacteria" id="CAC41846">
    <property type="protein sequence ID" value="CAC41846"/>
    <property type="gene ID" value="SMc01111"/>
</dbReference>
<dbReference type="KEGG" id="sme:SMc01111"/>
<dbReference type="PATRIC" id="fig|266834.11.peg.1782"/>
<dbReference type="eggNOG" id="COG0815">
    <property type="taxonomic scope" value="Bacteria"/>
</dbReference>
<dbReference type="HOGENOM" id="CLU_019563_3_1_5"/>
<dbReference type="OrthoDB" id="9804277at2"/>
<dbReference type="UniPathway" id="UPA00666"/>
<dbReference type="Proteomes" id="UP000001976">
    <property type="component" value="Chromosome"/>
</dbReference>
<dbReference type="GO" id="GO:0005886">
    <property type="term" value="C:plasma membrane"/>
    <property type="evidence" value="ECO:0007669"/>
    <property type="project" value="UniProtKB-SubCell"/>
</dbReference>
<dbReference type="GO" id="GO:0016410">
    <property type="term" value="F:N-acyltransferase activity"/>
    <property type="evidence" value="ECO:0007669"/>
    <property type="project" value="UniProtKB-UniRule"/>
</dbReference>
<dbReference type="GO" id="GO:0042158">
    <property type="term" value="P:lipoprotein biosynthetic process"/>
    <property type="evidence" value="ECO:0007669"/>
    <property type="project" value="UniProtKB-UniRule"/>
</dbReference>
<dbReference type="CDD" id="cd07571">
    <property type="entry name" value="ALP_N-acyl_transferase"/>
    <property type="match status" value="1"/>
</dbReference>
<dbReference type="Gene3D" id="3.60.110.10">
    <property type="entry name" value="Carbon-nitrogen hydrolase"/>
    <property type="match status" value="1"/>
</dbReference>
<dbReference type="HAMAP" id="MF_01148">
    <property type="entry name" value="Lnt"/>
    <property type="match status" value="1"/>
</dbReference>
<dbReference type="InterPro" id="IPR004563">
    <property type="entry name" value="Apolipo_AcylTrfase"/>
</dbReference>
<dbReference type="InterPro" id="IPR003010">
    <property type="entry name" value="C-N_Hydrolase"/>
</dbReference>
<dbReference type="InterPro" id="IPR036526">
    <property type="entry name" value="C-N_Hydrolase_sf"/>
</dbReference>
<dbReference type="InterPro" id="IPR045378">
    <property type="entry name" value="LNT_N"/>
</dbReference>
<dbReference type="NCBIfam" id="TIGR00546">
    <property type="entry name" value="lnt"/>
    <property type="match status" value="1"/>
</dbReference>
<dbReference type="PANTHER" id="PTHR38686">
    <property type="entry name" value="APOLIPOPROTEIN N-ACYLTRANSFERASE"/>
    <property type="match status" value="1"/>
</dbReference>
<dbReference type="PANTHER" id="PTHR38686:SF1">
    <property type="entry name" value="APOLIPOPROTEIN N-ACYLTRANSFERASE"/>
    <property type="match status" value="1"/>
</dbReference>
<dbReference type="Pfam" id="PF00795">
    <property type="entry name" value="CN_hydrolase"/>
    <property type="match status" value="1"/>
</dbReference>
<dbReference type="Pfam" id="PF20154">
    <property type="entry name" value="LNT_N"/>
    <property type="match status" value="1"/>
</dbReference>
<dbReference type="SUPFAM" id="SSF56317">
    <property type="entry name" value="Carbon-nitrogen hydrolase"/>
    <property type="match status" value="1"/>
</dbReference>
<dbReference type="PROSITE" id="PS50263">
    <property type="entry name" value="CN_HYDROLASE"/>
    <property type="match status" value="1"/>
</dbReference>
<proteinExistence type="inferred from homology"/>
<feature type="chain" id="PRO_0000178089" description="Apolipoprotein N-acyltransferase">
    <location>
        <begin position="1"/>
        <end position="531"/>
    </location>
</feature>
<feature type="transmembrane region" description="Helical" evidence="1">
    <location>
        <begin position="8"/>
        <end position="28"/>
    </location>
</feature>
<feature type="transmembrane region" description="Helical" evidence="1">
    <location>
        <begin position="34"/>
        <end position="54"/>
    </location>
</feature>
<feature type="transmembrane region" description="Helical" evidence="1">
    <location>
        <begin position="69"/>
        <end position="89"/>
    </location>
</feature>
<feature type="transmembrane region" description="Helical" evidence="1">
    <location>
        <begin position="105"/>
        <end position="125"/>
    </location>
</feature>
<feature type="transmembrane region" description="Helical" evidence="1">
    <location>
        <begin position="136"/>
        <end position="156"/>
    </location>
</feature>
<feature type="transmembrane region" description="Helical" evidence="1">
    <location>
        <begin position="178"/>
        <end position="198"/>
    </location>
</feature>
<feature type="transmembrane region" description="Helical" evidence="1">
    <location>
        <begin position="206"/>
        <end position="226"/>
    </location>
</feature>
<feature type="transmembrane region" description="Helical" evidence="1">
    <location>
        <begin position="507"/>
        <end position="527"/>
    </location>
</feature>
<feature type="domain" description="CN hydrolase" evidence="1">
    <location>
        <begin position="243"/>
        <end position="493"/>
    </location>
</feature>
<feature type="active site" description="Proton acceptor" evidence="1">
    <location>
        <position position="287"/>
    </location>
</feature>
<feature type="active site" evidence="1">
    <location>
        <position position="351"/>
    </location>
</feature>
<feature type="active site" description="Nucleophile" evidence="1">
    <location>
        <position position="405"/>
    </location>
</feature>
<protein>
    <recommendedName>
        <fullName evidence="1">Apolipoprotein N-acyltransferase</fullName>
        <shortName evidence="1">ALP N-acyltransferase</shortName>
        <ecNumber evidence="1">2.3.1.269</ecNumber>
    </recommendedName>
    <alternativeName>
        <fullName>ACT206</fullName>
    </alternativeName>
    <alternativeName>
        <fullName>Acid-inducible protein</fullName>
    </alternativeName>
</protein>
<sequence>MERLAGRIILLSGVSRTFVGFLAGLLAVLAQPPFGIFAAAFVSFPVLVWLIDGVAPDPGDGLLRRLMPPAAIGWSFGFGYFLGGLWWLGNALLVEADAFAWALPLTVVGLPAVLGLFYALAVVIARSLWSDGWGRIAALALGFGIAEWLRGFLFTGFPWNAIGYAAMPMPLMMQSASVVNLSTINMLAVFVFAAPALIWTGKGARAGLAIAAALFTAHVAFGFYRLAQPAPAPLQPEMTVRVVQPVIDQAKKLDDRERASIFEDHLSLTAAPVQDGAKRPDIVVWPETSIPFILTDNPDALARIADVLQDGQVLVAGAVRVEDAGAGLPPRYYNSVYVIDDRGQIVGAADKVHLVPFGEYLPFEDLLTSWGLSSVAASMPGGFSAASTRPVLTLPGGRRIYPMICYEAIFADEVDGNARLADALLNITNDAWFGDTPGPRQHFHQAQLRAVEAGTPMIRAANTGISAVVDARGVLVVVLGYNYRGVIDTILPGKLPTLTNIATRSQIFWLTTGILFLVAAISRLGFNIRKN</sequence>
<name>LNT_RHIME</name>
<reference key="1">
    <citation type="journal article" date="2001" name="Proc. Natl. Acad. Sci. U.S.A.">
        <title>Analysis of the chromosome sequence of the legume symbiont Sinorhizobium meliloti strain 1021.</title>
        <authorList>
            <person name="Capela D."/>
            <person name="Barloy-Hubler F."/>
            <person name="Gouzy J."/>
            <person name="Bothe G."/>
            <person name="Ampe F."/>
            <person name="Batut J."/>
            <person name="Boistard P."/>
            <person name="Becker A."/>
            <person name="Boutry M."/>
            <person name="Cadieu E."/>
            <person name="Dreano S."/>
            <person name="Gloux S."/>
            <person name="Godrie T."/>
            <person name="Goffeau A."/>
            <person name="Kahn D."/>
            <person name="Kiss E."/>
            <person name="Lelaure V."/>
            <person name="Masuy D."/>
            <person name="Pohl T."/>
            <person name="Portetelle D."/>
            <person name="Puehler A."/>
            <person name="Purnelle B."/>
            <person name="Ramsperger U."/>
            <person name="Renard C."/>
            <person name="Thebault P."/>
            <person name="Vandenbol M."/>
            <person name="Weidner S."/>
            <person name="Galibert F."/>
        </authorList>
    </citation>
    <scope>NUCLEOTIDE SEQUENCE [LARGE SCALE GENOMIC DNA]</scope>
    <source>
        <strain>1021</strain>
    </source>
</reference>
<reference key="2">
    <citation type="journal article" date="2001" name="Science">
        <title>The composite genome of the legume symbiont Sinorhizobium meliloti.</title>
        <authorList>
            <person name="Galibert F."/>
            <person name="Finan T.M."/>
            <person name="Long S.R."/>
            <person name="Puehler A."/>
            <person name="Abola P."/>
            <person name="Ampe F."/>
            <person name="Barloy-Hubler F."/>
            <person name="Barnett M.J."/>
            <person name="Becker A."/>
            <person name="Boistard P."/>
            <person name="Bothe G."/>
            <person name="Boutry M."/>
            <person name="Bowser L."/>
            <person name="Buhrmester J."/>
            <person name="Cadieu E."/>
            <person name="Capela D."/>
            <person name="Chain P."/>
            <person name="Cowie A."/>
            <person name="Davis R.W."/>
            <person name="Dreano S."/>
            <person name="Federspiel N.A."/>
            <person name="Fisher R.F."/>
            <person name="Gloux S."/>
            <person name="Godrie T."/>
            <person name="Goffeau A."/>
            <person name="Golding B."/>
            <person name="Gouzy J."/>
            <person name="Gurjal M."/>
            <person name="Hernandez-Lucas I."/>
            <person name="Hong A."/>
            <person name="Huizar L."/>
            <person name="Hyman R.W."/>
            <person name="Jones T."/>
            <person name="Kahn D."/>
            <person name="Kahn M.L."/>
            <person name="Kalman S."/>
            <person name="Keating D.H."/>
            <person name="Kiss E."/>
            <person name="Komp C."/>
            <person name="Lelaure V."/>
            <person name="Masuy D."/>
            <person name="Palm C."/>
            <person name="Peck M.C."/>
            <person name="Pohl T.M."/>
            <person name="Portetelle D."/>
            <person name="Purnelle B."/>
            <person name="Ramsperger U."/>
            <person name="Surzycki R."/>
            <person name="Thebault P."/>
            <person name="Vandenbol M."/>
            <person name="Vorhoelter F.J."/>
            <person name="Weidner S."/>
            <person name="Wells D.H."/>
            <person name="Wong K."/>
            <person name="Yeh K.-C."/>
            <person name="Batut J."/>
        </authorList>
    </citation>
    <scope>NUCLEOTIDE SEQUENCE [LARGE SCALE GENOMIC DNA]</scope>
    <source>
        <strain>1021</strain>
    </source>
</reference>
<evidence type="ECO:0000255" key="1">
    <source>
        <dbReference type="HAMAP-Rule" id="MF_01148"/>
    </source>
</evidence>
<evidence type="ECO:0000305" key="2"/>
<organism>
    <name type="scientific">Rhizobium meliloti (strain 1021)</name>
    <name type="common">Ensifer meliloti</name>
    <name type="synonym">Sinorhizobium meliloti</name>
    <dbReference type="NCBI Taxonomy" id="266834"/>
    <lineage>
        <taxon>Bacteria</taxon>
        <taxon>Pseudomonadati</taxon>
        <taxon>Pseudomonadota</taxon>
        <taxon>Alphaproteobacteria</taxon>
        <taxon>Hyphomicrobiales</taxon>
        <taxon>Rhizobiaceae</taxon>
        <taxon>Sinorhizobium/Ensifer group</taxon>
        <taxon>Sinorhizobium</taxon>
    </lineage>
</organism>
<accession>P58377</accession>
<comment type="function">
    <text evidence="1">Catalyzes the phospholipid dependent N-acylation of the N-terminal cysteine of apolipoprotein, the last step in lipoprotein maturation.</text>
</comment>
<comment type="catalytic activity">
    <reaction evidence="1">
        <text>N-terminal S-1,2-diacyl-sn-glyceryl-L-cysteinyl-[lipoprotein] + a glycerophospholipid = N-acyl-S-1,2-diacyl-sn-glyceryl-L-cysteinyl-[lipoprotein] + a 2-acyl-sn-glycero-3-phospholipid + H(+)</text>
        <dbReference type="Rhea" id="RHEA:48228"/>
        <dbReference type="Rhea" id="RHEA-COMP:14681"/>
        <dbReference type="Rhea" id="RHEA-COMP:14684"/>
        <dbReference type="ChEBI" id="CHEBI:15378"/>
        <dbReference type="ChEBI" id="CHEBI:136912"/>
        <dbReference type="ChEBI" id="CHEBI:140656"/>
        <dbReference type="ChEBI" id="CHEBI:140657"/>
        <dbReference type="ChEBI" id="CHEBI:140660"/>
        <dbReference type="EC" id="2.3.1.269"/>
    </reaction>
</comment>
<comment type="pathway">
    <text evidence="1">Protein modification; lipoprotein biosynthesis (N-acyl transfer).</text>
</comment>
<comment type="subcellular location">
    <subcellularLocation>
        <location evidence="1">Cell inner membrane</location>
        <topology evidence="1">Multi-pass membrane protein</topology>
    </subcellularLocation>
</comment>
<comment type="similarity">
    <text evidence="1 2">Belongs to the CN hydrolase family. Apolipoprotein N-acyltransferase subfamily.</text>
</comment>
<keyword id="KW-0012">Acyltransferase</keyword>
<keyword id="KW-0997">Cell inner membrane</keyword>
<keyword id="KW-1003">Cell membrane</keyword>
<keyword id="KW-0472">Membrane</keyword>
<keyword id="KW-1185">Reference proteome</keyword>
<keyword id="KW-0808">Transferase</keyword>
<keyword id="KW-0812">Transmembrane</keyword>
<keyword id="KW-1133">Transmembrane helix</keyword>